<accession>P41148</accession>
<comment type="function">
    <text evidence="1 2 8">ATP-dependent chaperone involved in the processing of proteins in the endoplasmic reticulum, regulating their transport (PubMed:17936703). Together with MESD, acts as a modulator of the Wnt pathway by promoting the folding of LRP6, a coreceptor of the canonical Wnt pathway (By similarity). When associated with CNPY3, required for proper folding of Toll-like receptors (By similarity). Promotes folding and trafficking of TLR4 to the cell surface (By similarity). May participate in the unfolding of cytosolic leaderless cargos (lacking the secretion signal sequence) such as the interleukin 1/IL-1 to facilitate their translocation into the ERGIC (endoplasmic reticulum-Golgi intermediate compartment) and secretion; the translocation process is mediated by the cargo receptor TMED10 (By similarity). May also function in endoplasmic reticulum associated degradation (ERAD); it is however unclear whether it participates to ERAD or is a target of ERAD (By similarity).</text>
</comment>
<comment type="catalytic activity">
    <reaction evidence="8">
        <text>ATP + H2O = ADP + phosphate + H(+)</text>
        <dbReference type="Rhea" id="RHEA:13065"/>
        <dbReference type="ChEBI" id="CHEBI:15377"/>
        <dbReference type="ChEBI" id="CHEBI:15378"/>
        <dbReference type="ChEBI" id="CHEBI:30616"/>
        <dbReference type="ChEBI" id="CHEBI:43474"/>
        <dbReference type="ChEBI" id="CHEBI:456216"/>
    </reaction>
    <physiologicalReaction direction="left-to-right" evidence="8">
        <dbReference type="Rhea" id="RHEA:13066"/>
    </physiologicalReaction>
</comment>
<comment type="biophysicochemical properties">
    <kinetics>
        <KM evidence="8">10 uM for ATP</KM>
    </kinetics>
</comment>
<comment type="subunit">
    <text evidence="1 2">Homodimer; disulfide-linked. Component of an EIF2 complex at least composed of CELF1/CUGBP1, CALR, CALR3, EIF2S1, EIF2S2, HSP90B1 and HSPA5 (By similarity). Part of a large chaperone multiprotein complex comprising DNAJB11, HSP90B1, HSPA5, HYOU, PDIA2, PDIA4, PDIA6, PPIB, SDF2L1, UGGT1 and very small amounts of ERP29, but not, or at very low levels, CALR nor CANX. Interacts with AIMP1; regulates its retention in the endoplasmic reticulum. Hyperglycosylated form interacts with OS9; promoting its degradation by the endoplasmic reticulum associated degradation (ERAD) (By similarity). Interacts with CNPY3. This interaction is disrupted in the presence of ATP (By similarity). Interacts with TLR4 and TLR9, but not with TLR3 (By similarity). Interacts with MZB1 in a calcium-dependent manner (By similarity). Interacts with METTL23. Interacts with IL1B; the interaction facilitates cargo translocation into the ERGIC. Interacts with EIF2AK3 (By similarity).</text>
</comment>
<comment type="subcellular location">
    <subcellularLocation>
        <location evidence="1">Endoplasmic reticulum lumen</location>
    </subcellularLocation>
    <subcellularLocation>
        <location evidence="9">Sarcoplasmic reticulum lumen</location>
    </subcellularLocation>
    <subcellularLocation>
        <location evidence="2">Melanosome</location>
    </subcellularLocation>
</comment>
<comment type="tissue specificity">
    <text evidence="9">Detected in heart muscle (at protein level).</text>
</comment>
<comment type="domain">
    <text evidence="2">The SRT pseudosubstrate motif associates with STT3A during translation in normal conditions, preventing glycosylation of facultative sites until HSP90B1 folding is completed.</text>
</comment>
<comment type="PTM">
    <text evidence="9">Phosphorylated by CK2.</text>
</comment>
<comment type="PTM">
    <text evidence="2">N-glycosylated cotranslationally at Asn-217 by STT3A-containing OST-A complex: this glycosylation is constitutive. In response to various stress, 5 additional facultative sites (Asn-62, Asn-107, Asn-445, Asn-481 and Asn-502) can be glycosylated post-translationally by STT3B-containing OST-B complex, leading to a hyperglycosylated form that is degraded by the ER-associated degradation (ERAD) pathway. In normal conditions, the OST-A complex together with CCDC134 prevent glycosylation at facultative sites during protein folding, thereby preventing hyperglycosylation. Mechanistically, nascent HSP90B1 is tethered during translation to a specialized CCDC134-containing translocon that forms a microenvironment for its folding, in which STT3A associates with the SRT pseudosubstrate motif, and prevents access to facultative glycosylation sites until folding is completed, rendering its facultative sites inaccessible to the OST-B complex.</text>
</comment>
<comment type="similarity">
    <text evidence="11">Belongs to the heat shock protein 90 family.</text>
</comment>
<feature type="signal peptide" evidence="4">
    <location>
        <begin position="1"/>
        <end position="21"/>
    </location>
</feature>
<feature type="chain" id="PRO_0000013597" description="Endoplasmin">
    <location>
        <begin position="22"/>
        <end position="804"/>
    </location>
</feature>
<feature type="region of interest" description="Disordered" evidence="5">
    <location>
        <begin position="288"/>
        <end position="323"/>
    </location>
</feature>
<feature type="region of interest" description="Disordered" evidence="5">
    <location>
        <begin position="750"/>
        <end position="804"/>
    </location>
</feature>
<feature type="short sequence motif" description="SRT pseudosubstrate motif" evidence="2">
    <location>
        <begin position="42"/>
        <end position="44"/>
    </location>
</feature>
<feature type="short sequence motif" description="Prevents secretion from ER" evidence="4">
    <location>
        <begin position="801"/>
        <end position="804"/>
    </location>
</feature>
<feature type="compositionally biased region" description="Acidic residues" evidence="5">
    <location>
        <begin position="289"/>
        <end position="317"/>
    </location>
</feature>
<feature type="compositionally biased region" description="Acidic residues" evidence="5">
    <location>
        <begin position="757"/>
        <end position="791"/>
    </location>
</feature>
<feature type="compositionally biased region" description="Basic and acidic residues" evidence="5">
    <location>
        <begin position="792"/>
        <end position="804"/>
    </location>
</feature>
<feature type="binding site" evidence="6 7 8 15 16 19 23 24">
    <location>
        <position position="107"/>
    </location>
    <ligand>
        <name>ATP</name>
        <dbReference type="ChEBI" id="CHEBI:30616"/>
    </ligand>
</feature>
<feature type="binding site" evidence="6 7 8 14 15 16 19 23 24">
    <location>
        <position position="149"/>
    </location>
    <ligand>
        <name>ATP</name>
        <dbReference type="ChEBI" id="CHEBI:30616"/>
    </ligand>
</feature>
<feature type="binding site" evidence="6 7 8 14 15 16 23 24">
    <location>
        <position position="162"/>
    </location>
    <ligand>
        <name>ATP</name>
        <dbReference type="ChEBI" id="CHEBI:30616"/>
    </ligand>
</feature>
<feature type="binding site" evidence="6 7 8 14 15 16 19 23 24">
    <location>
        <position position="199"/>
    </location>
    <ligand>
        <name>ATP</name>
        <dbReference type="ChEBI" id="CHEBI:30616"/>
    </ligand>
</feature>
<feature type="site" description="Important for ATP hydrolysis" evidence="8">
    <location>
        <position position="448"/>
    </location>
</feature>
<feature type="modified residue" description="Phosphoserine" evidence="2">
    <location>
        <position position="64"/>
    </location>
</feature>
<feature type="modified residue" description="N6-(2-hydroxyisobutyryl)lysine" evidence="2">
    <location>
        <position position="168"/>
    </location>
</feature>
<feature type="modified residue" description="Phosphoserine" evidence="3">
    <location>
        <position position="172"/>
    </location>
</feature>
<feature type="modified residue" description="Phosphothreonine; by CK2" evidence="4">
    <location>
        <position position="288"/>
    </location>
</feature>
<feature type="modified residue" description="Phosphoserine; by CK2" evidence="2 4">
    <location>
        <position position="306"/>
    </location>
</feature>
<feature type="modified residue" description="Phosphoserine" evidence="3">
    <location>
        <position position="403"/>
    </location>
</feature>
<feature type="modified residue" description="N6-succinyllysine" evidence="1">
    <location>
        <position position="404"/>
    </location>
</feature>
<feature type="modified residue" description="Phosphoserine" evidence="2">
    <location>
        <position position="447"/>
    </location>
</feature>
<feature type="modified residue" description="N6-acetyllysine" evidence="1">
    <location>
        <position position="479"/>
    </location>
</feature>
<feature type="modified residue" description="N6-succinyllysine" evidence="1">
    <location>
        <position position="633"/>
    </location>
</feature>
<feature type="modified residue" description="Phosphothreonine; by CK2" evidence="4">
    <location>
        <position position="766"/>
    </location>
</feature>
<feature type="modified residue" description="Phosphothreonine; by CK2" evidence="4">
    <location>
        <position position="770"/>
    </location>
</feature>
<feature type="modified residue" description="Phosphothreonine; by CK2" evidence="4">
    <location>
        <position position="774"/>
    </location>
</feature>
<feature type="modified residue" description="Phosphothreonine; by CK2" evidence="2 4">
    <location>
        <position position="786"/>
    </location>
</feature>
<feature type="glycosylation site" description="N-linked (GlcNAc...) asparagine" evidence="4">
    <location>
        <position position="62"/>
    </location>
</feature>
<feature type="glycosylation site" description="N-linked (GlcNAc...) asparagine" evidence="4">
    <location>
        <position position="107"/>
    </location>
</feature>
<feature type="glycosylation site" description="N-linked (GlcNAc...) asparagine" evidence="4">
    <location>
        <position position="217"/>
    </location>
</feature>
<feature type="glycosylation site" description="N-linked (GlcNAc...) asparagine" evidence="4">
    <location>
        <position position="445"/>
    </location>
</feature>
<feature type="glycosylation site" description="N-linked (GlcNAc...) asparagine" evidence="4">
    <location>
        <position position="481"/>
    </location>
</feature>
<feature type="glycosylation site" description="N-linked (GlcNAc...) asparagine" evidence="4">
    <location>
        <position position="502"/>
    </location>
</feature>
<feature type="disulfide bond" description="Interchain" evidence="1">
    <location>
        <position position="138"/>
    </location>
</feature>
<feature type="mutagenesis site" description="Loss of ATPase activity." evidence="8">
    <original>E</original>
    <variation>A</variation>
    <location>
        <position position="103"/>
    </location>
</feature>
<feature type="mutagenesis site" description="Reduces ATPase activity by 85%." evidence="8">
    <original>R</original>
    <variation>A</variation>
    <location>
        <position position="448"/>
    </location>
</feature>
<feature type="turn" evidence="27">
    <location>
        <begin position="72"/>
        <end position="74"/>
    </location>
</feature>
<feature type="strand" evidence="33">
    <location>
        <begin position="75"/>
        <end position="77"/>
    </location>
</feature>
<feature type="helix" evidence="27">
    <location>
        <begin position="80"/>
        <end position="92"/>
    </location>
</feature>
<feature type="turn" evidence="27">
    <location>
        <begin position="93"/>
        <end position="95"/>
    </location>
</feature>
<feature type="helix" evidence="27">
    <location>
        <begin position="99"/>
        <end position="121"/>
    </location>
</feature>
<feature type="turn" evidence="27">
    <location>
        <begin position="123"/>
        <end position="128"/>
    </location>
</feature>
<feature type="strand" evidence="27">
    <location>
        <begin position="134"/>
        <end position="139"/>
    </location>
</feature>
<feature type="turn" evidence="27">
    <location>
        <begin position="140"/>
        <end position="143"/>
    </location>
</feature>
<feature type="strand" evidence="27">
    <location>
        <begin position="144"/>
        <end position="149"/>
    </location>
</feature>
<feature type="helix" evidence="27">
    <location>
        <begin position="156"/>
        <end position="164"/>
    </location>
</feature>
<feature type="helix" evidence="32">
    <location>
        <begin position="169"/>
        <end position="184"/>
    </location>
</feature>
<feature type="helix" evidence="27">
    <location>
        <begin position="189"/>
        <end position="194"/>
    </location>
</feature>
<feature type="helix" evidence="27">
    <location>
        <begin position="198"/>
        <end position="204"/>
    </location>
</feature>
<feature type="strand" evidence="27">
    <location>
        <begin position="206"/>
        <end position="214"/>
    </location>
</feature>
<feature type="strand" evidence="30">
    <location>
        <begin position="216"/>
        <end position="218"/>
    </location>
</feature>
<feature type="strand" evidence="27">
    <location>
        <begin position="221"/>
        <end position="228"/>
    </location>
</feature>
<feature type="strand" evidence="27">
    <location>
        <begin position="230"/>
        <end position="234"/>
    </location>
</feature>
<feature type="strand" evidence="27">
    <location>
        <begin position="241"/>
        <end position="251"/>
    </location>
</feature>
<feature type="helix" evidence="27">
    <location>
        <begin position="253"/>
        <end position="259"/>
    </location>
</feature>
<feature type="helix" evidence="27">
    <location>
        <begin position="261"/>
        <end position="272"/>
    </location>
</feature>
<feature type="strand" evidence="31">
    <location>
        <begin position="273"/>
        <end position="277"/>
    </location>
</feature>
<feature type="strand" evidence="27">
    <location>
        <begin position="279"/>
        <end position="284"/>
    </location>
</feature>
<feature type="strand" evidence="34">
    <location>
        <begin position="325"/>
        <end position="328"/>
    </location>
</feature>
<feature type="strand" evidence="27">
    <location>
        <begin position="331"/>
        <end position="335"/>
    </location>
</feature>
<feature type="turn" evidence="29">
    <location>
        <begin position="342"/>
        <end position="344"/>
    </location>
</feature>
<feature type="turn" evidence="29">
    <location>
        <begin position="347"/>
        <end position="349"/>
    </location>
</feature>
<feature type="helix" evidence="29">
    <location>
        <begin position="352"/>
        <end position="361"/>
    </location>
</feature>
<feature type="strand" evidence="29">
    <location>
        <begin position="370"/>
        <end position="377"/>
    </location>
</feature>
<feature type="strand" evidence="29">
    <location>
        <begin position="379"/>
        <end position="381"/>
    </location>
</feature>
<feature type="strand" evidence="29">
    <location>
        <begin position="383"/>
        <end position="389"/>
    </location>
</feature>
<feature type="turn" evidence="31">
    <location>
        <begin position="395"/>
        <end position="403"/>
    </location>
</feature>
<feature type="strand" evidence="29">
    <location>
        <begin position="409"/>
        <end position="413"/>
    </location>
</feature>
<feature type="strand" evidence="29">
    <location>
        <begin position="416"/>
        <end position="420"/>
    </location>
</feature>
<feature type="turn" evidence="31">
    <location>
        <begin position="423"/>
        <end position="425"/>
    </location>
</feature>
<feature type="helix" evidence="29">
    <location>
        <begin position="428"/>
        <end position="430"/>
    </location>
</feature>
<feature type="strand" evidence="29">
    <location>
        <begin position="434"/>
        <end position="442"/>
    </location>
</feature>
<feature type="strand" evidence="29">
    <location>
        <begin position="444"/>
        <end position="446"/>
    </location>
</feature>
<feature type="helix" evidence="29">
    <location>
        <begin position="448"/>
        <end position="452"/>
    </location>
</feature>
<feature type="helix" evidence="29">
    <location>
        <begin position="455"/>
        <end position="474"/>
    </location>
</feature>
<feature type="helix" evidence="29">
    <location>
        <begin position="477"/>
        <end position="482"/>
    </location>
</feature>
<feature type="helix" evidence="29">
    <location>
        <begin position="484"/>
        <end position="498"/>
    </location>
</feature>
<feature type="helix" evidence="29">
    <location>
        <begin position="500"/>
        <end position="502"/>
    </location>
</feature>
<feature type="helix" evidence="29">
    <location>
        <begin position="503"/>
        <end position="507"/>
    </location>
</feature>
<feature type="strand" evidence="29">
    <location>
        <begin position="512"/>
        <end position="514"/>
    </location>
</feature>
<feature type="strand" evidence="29">
    <location>
        <begin position="517"/>
        <end position="519"/>
    </location>
</feature>
<feature type="strand" evidence="31">
    <location>
        <begin position="521"/>
        <end position="523"/>
    </location>
</feature>
<feature type="helix" evidence="29">
    <location>
        <begin position="524"/>
        <end position="530"/>
    </location>
</feature>
<feature type="strand" evidence="29">
    <location>
        <begin position="537"/>
        <end position="542"/>
    </location>
</feature>
<feature type="helix" evidence="29">
    <location>
        <begin position="546"/>
        <end position="550"/>
    </location>
</feature>
<feature type="helix" evidence="29">
    <location>
        <begin position="553"/>
        <end position="555"/>
    </location>
</feature>
<feature type="helix" evidence="29">
    <location>
        <begin position="556"/>
        <end position="560"/>
    </location>
</feature>
<feature type="strand" evidence="29">
    <location>
        <begin position="566"/>
        <end position="568"/>
    </location>
</feature>
<feature type="helix" evidence="29">
    <location>
        <begin position="572"/>
        <end position="578"/>
    </location>
</feature>
<feature type="strand" evidence="29">
    <location>
        <begin position="586"/>
        <end position="590"/>
    </location>
</feature>
<feature type="helix" evidence="29">
    <location>
        <begin position="602"/>
        <end position="614"/>
    </location>
</feature>
<feature type="helix" evidence="29">
    <location>
        <begin position="616"/>
        <end position="624"/>
    </location>
</feature>
<feature type="turn" evidence="29">
    <location>
        <begin position="625"/>
        <end position="630"/>
    </location>
</feature>
<feature type="strand" evidence="29">
    <location>
        <begin position="631"/>
        <end position="636"/>
    </location>
</feature>
<feature type="strand" evidence="29">
    <location>
        <begin position="644"/>
        <end position="649"/>
    </location>
</feature>
<feature type="helix" evidence="29">
    <location>
        <begin position="656"/>
        <end position="668"/>
    </location>
</feature>
<feature type="helix" evidence="31">
    <location>
        <begin position="670"/>
        <end position="673"/>
    </location>
</feature>
<feature type="strand" evidence="29">
    <location>
        <begin position="677"/>
        <end position="680"/>
    </location>
</feature>
<feature type="strand" evidence="29">
    <location>
        <begin position="683"/>
        <end position="687"/>
    </location>
</feature>
<feature type="strand" evidence="31">
    <location>
        <begin position="689"/>
        <end position="691"/>
    </location>
</feature>
<feature type="helix" evidence="29">
    <location>
        <begin position="692"/>
        <end position="703"/>
    </location>
</feature>
<feature type="helix" evidence="29">
    <location>
        <begin position="708"/>
        <end position="725"/>
    </location>
</feature>
<feature type="helix" evidence="29">
    <location>
        <begin position="732"/>
        <end position="744"/>
    </location>
</feature>
<feature type="turn" evidence="28">
    <location>
        <begin position="751"/>
        <end position="757"/>
    </location>
</feature>
<feature type="helix" evidence="28">
    <location>
        <begin position="758"/>
        <end position="760"/>
    </location>
</feature>
<feature type="helix" evidence="28">
    <location>
        <begin position="762"/>
        <end position="764"/>
    </location>
</feature>
<dbReference type="EC" id="3.6.4.-" evidence="8"/>
<dbReference type="EMBL" id="U01153">
    <property type="protein sequence ID" value="AAA17708.1"/>
    <property type="molecule type" value="mRNA"/>
</dbReference>
<dbReference type="PIR" id="A53211">
    <property type="entry name" value="A53211"/>
</dbReference>
<dbReference type="RefSeq" id="NP_001003327.1">
    <property type="nucleotide sequence ID" value="NM_001003327.2"/>
</dbReference>
<dbReference type="PDB" id="1QY8">
    <property type="method" value="X-ray"/>
    <property type="resolution" value="1.85 A"/>
    <property type="chains" value="A=69-337"/>
</dbReference>
<dbReference type="PDB" id="1QYE">
    <property type="method" value="X-ray"/>
    <property type="resolution" value="2.10 A"/>
    <property type="chains" value="A=69-337"/>
</dbReference>
<dbReference type="PDB" id="1TBW">
    <property type="method" value="X-ray"/>
    <property type="resolution" value="2.15 A"/>
    <property type="chains" value="A/B=69-286, A/B=328-337"/>
</dbReference>
<dbReference type="PDB" id="1TC0">
    <property type="method" value="X-ray"/>
    <property type="resolution" value="2.20 A"/>
    <property type="chains" value="A/B=69-286, A/B=328-337"/>
</dbReference>
<dbReference type="PDB" id="1TC6">
    <property type="method" value="X-ray"/>
    <property type="resolution" value="1.87 A"/>
    <property type="chains" value="A/B=69-286, A/B=328-337"/>
</dbReference>
<dbReference type="PDB" id="1U0Z">
    <property type="method" value="X-ray"/>
    <property type="resolution" value="1.90 A"/>
    <property type="chains" value="A/B=69-286, A/B=328-337"/>
</dbReference>
<dbReference type="PDB" id="1U2O">
    <property type="method" value="X-ray"/>
    <property type="resolution" value="2.10 A"/>
    <property type="chains" value="A/B=69-286, A/B=328-337"/>
</dbReference>
<dbReference type="PDB" id="1YSZ">
    <property type="method" value="X-ray"/>
    <property type="resolution" value="2.65 A"/>
    <property type="chains" value="A=69-286, A=328-337"/>
</dbReference>
<dbReference type="PDB" id="1YT0">
    <property type="method" value="X-ray"/>
    <property type="resolution" value="2.40 A"/>
    <property type="chains" value="A=69-286, A=328-337"/>
</dbReference>
<dbReference type="PDB" id="1YT1">
    <property type="method" value="X-ray"/>
    <property type="resolution" value="2.20 A"/>
    <property type="chains" value="A/B=69-286, A/B=328-337"/>
</dbReference>
<dbReference type="PDB" id="1YT2">
    <property type="method" value="X-ray"/>
    <property type="resolution" value="3.25 A"/>
    <property type="chains" value="A=69-337"/>
</dbReference>
<dbReference type="PDB" id="2ESA">
    <property type="method" value="X-ray"/>
    <property type="resolution" value="1.90 A"/>
    <property type="chains" value="A=69-286, A=328-337"/>
</dbReference>
<dbReference type="PDB" id="2EXL">
    <property type="method" value="X-ray"/>
    <property type="resolution" value="2.35 A"/>
    <property type="chains" value="A/B=69-286, A/B=328-337"/>
</dbReference>
<dbReference type="PDB" id="2FYP">
    <property type="method" value="X-ray"/>
    <property type="resolution" value="1.95 A"/>
    <property type="chains" value="A/B=69-286, A/B=328-337"/>
</dbReference>
<dbReference type="PDB" id="2GFD">
    <property type="method" value="X-ray"/>
    <property type="resolution" value="2.30 A"/>
    <property type="chains" value="A/B=69-286, A/B=328-337"/>
</dbReference>
<dbReference type="PDB" id="2GQP">
    <property type="method" value="X-ray"/>
    <property type="resolution" value="1.50 A"/>
    <property type="chains" value="A/B=69-286, A/B=328-337"/>
</dbReference>
<dbReference type="PDB" id="2H8M">
    <property type="method" value="X-ray"/>
    <property type="resolution" value="1.80 A"/>
    <property type="chains" value="A/B=69-286, A/B=328-337"/>
</dbReference>
<dbReference type="PDB" id="2HCH">
    <property type="method" value="X-ray"/>
    <property type="resolution" value="2.30 A"/>
    <property type="chains" value="A/B=69-286, A/B=328-337"/>
</dbReference>
<dbReference type="PDB" id="2HG1">
    <property type="method" value="X-ray"/>
    <property type="resolution" value="2.30 A"/>
    <property type="chains" value="A/B=69-286"/>
</dbReference>
<dbReference type="PDB" id="2O1T">
    <property type="method" value="X-ray"/>
    <property type="resolution" value="3.20 A"/>
    <property type="chains" value="A/B/C/D/E/F/G/H/I/J=336-765"/>
</dbReference>
<dbReference type="PDB" id="2O1U">
    <property type="method" value="X-ray"/>
    <property type="resolution" value="2.40 A"/>
    <property type="chains" value="A/B=73-286, A/B=328-754"/>
</dbReference>
<dbReference type="PDB" id="2O1V">
    <property type="method" value="X-ray"/>
    <property type="resolution" value="2.45 A"/>
    <property type="chains" value="A/B=73-286, A/B=328-754"/>
</dbReference>
<dbReference type="PDB" id="2O1W">
    <property type="method" value="X-ray"/>
    <property type="resolution" value="3.40 A"/>
    <property type="chains" value="A/B/C/D/E=73-286, A/B/C/D/E=328-594"/>
</dbReference>
<dbReference type="PDB" id="3O2F">
    <property type="method" value="X-ray"/>
    <property type="resolution" value="2.00 A"/>
    <property type="chains" value="A/B=69-286, A/B=328-337"/>
</dbReference>
<dbReference type="PDB" id="5IN9">
    <property type="method" value="X-ray"/>
    <property type="resolution" value="2.60 A"/>
    <property type="chains" value="A/B=69-286, A/B=328-337"/>
</dbReference>
<dbReference type="PDB" id="5TTZ">
    <property type="method" value="X-ray"/>
    <property type="resolution" value="2.71 A"/>
    <property type="chains" value="A/B=69-286"/>
</dbReference>
<dbReference type="PDB" id="5ULS">
    <property type="method" value="X-ray"/>
    <property type="resolution" value="2.62 A"/>
    <property type="chains" value="A/B=48-286, A/B=328-754"/>
</dbReference>
<dbReference type="PDB" id="5WMT">
    <property type="method" value="X-ray"/>
    <property type="resolution" value="2.75 A"/>
    <property type="chains" value="A/B/C/D=69-286"/>
</dbReference>
<dbReference type="PDB" id="6AOL">
    <property type="method" value="X-ray"/>
    <property type="resolution" value="2.76 A"/>
    <property type="chains" value="A=69-286"/>
</dbReference>
<dbReference type="PDB" id="6AOM">
    <property type="method" value="X-ray"/>
    <property type="resolution" value="2.87 A"/>
    <property type="chains" value="A/B=69-286"/>
</dbReference>
<dbReference type="PDB" id="6ASP">
    <property type="method" value="X-ray"/>
    <property type="resolution" value="2.70 A"/>
    <property type="chains" value="A/B=69-286"/>
</dbReference>
<dbReference type="PDB" id="6ASQ">
    <property type="method" value="X-ray"/>
    <property type="resolution" value="2.35 A"/>
    <property type="chains" value="A/B=69-286"/>
</dbReference>
<dbReference type="PDB" id="6BAW">
    <property type="method" value="X-ray"/>
    <property type="resolution" value="2.70 A"/>
    <property type="chains" value="A/B/C/D=69-286"/>
</dbReference>
<dbReference type="PDB" id="6C91">
    <property type="method" value="X-ray"/>
    <property type="resolution" value="2.90 A"/>
    <property type="chains" value="B/C=69-286"/>
</dbReference>
<dbReference type="PDB" id="6CYI">
    <property type="method" value="X-ray"/>
    <property type="resolution" value="1.76 A"/>
    <property type="chains" value="A=69-337"/>
</dbReference>
<dbReference type="PDB" id="6D1X">
    <property type="method" value="X-ray"/>
    <property type="resolution" value="2.30 A"/>
    <property type="chains" value="A=69-337"/>
</dbReference>
<dbReference type="PDB" id="6D28">
    <property type="method" value="X-ray"/>
    <property type="resolution" value="1.75 A"/>
    <property type="chains" value="A=69-337"/>
</dbReference>
<dbReference type="PDB" id="8SSV">
    <property type="method" value="X-ray"/>
    <property type="resolution" value="1.72 A"/>
    <property type="chains" value="A/B=69-337"/>
</dbReference>
<dbReference type="PDB" id="8TF0">
    <property type="method" value="X-ray"/>
    <property type="resolution" value="2.79 A"/>
    <property type="chains" value="A/B/C/D=69-337"/>
</dbReference>
<dbReference type="PDBsum" id="1QY8"/>
<dbReference type="PDBsum" id="1QYE"/>
<dbReference type="PDBsum" id="1TBW"/>
<dbReference type="PDBsum" id="1TC0"/>
<dbReference type="PDBsum" id="1TC6"/>
<dbReference type="PDBsum" id="1U0Z"/>
<dbReference type="PDBsum" id="1U2O"/>
<dbReference type="PDBsum" id="1YSZ"/>
<dbReference type="PDBsum" id="1YT0"/>
<dbReference type="PDBsum" id="1YT1"/>
<dbReference type="PDBsum" id="1YT2"/>
<dbReference type="PDBsum" id="2ESA"/>
<dbReference type="PDBsum" id="2EXL"/>
<dbReference type="PDBsum" id="2FYP"/>
<dbReference type="PDBsum" id="2GFD"/>
<dbReference type="PDBsum" id="2GQP"/>
<dbReference type="PDBsum" id="2H8M"/>
<dbReference type="PDBsum" id="2HCH"/>
<dbReference type="PDBsum" id="2HG1"/>
<dbReference type="PDBsum" id="2O1T"/>
<dbReference type="PDBsum" id="2O1U"/>
<dbReference type="PDBsum" id="2O1V"/>
<dbReference type="PDBsum" id="2O1W"/>
<dbReference type="PDBsum" id="3O2F"/>
<dbReference type="PDBsum" id="5IN9"/>
<dbReference type="PDBsum" id="5TTZ"/>
<dbReference type="PDBsum" id="5ULS"/>
<dbReference type="PDBsum" id="5WMT"/>
<dbReference type="PDBsum" id="6AOL"/>
<dbReference type="PDBsum" id="6AOM"/>
<dbReference type="PDBsum" id="6ASP"/>
<dbReference type="PDBsum" id="6ASQ"/>
<dbReference type="PDBsum" id="6BAW"/>
<dbReference type="PDBsum" id="6C91"/>
<dbReference type="PDBsum" id="6CYI"/>
<dbReference type="PDBsum" id="6D1X"/>
<dbReference type="PDBsum" id="6D28"/>
<dbReference type="PDBsum" id="8SSV"/>
<dbReference type="PDBsum" id="8TF0"/>
<dbReference type="SMR" id="P41148"/>
<dbReference type="FunCoup" id="P41148">
    <property type="interactions" value="1959"/>
</dbReference>
<dbReference type="STRING" id="9615.ENSCAFP00000057899"/>
<dbReference type="BindingDB" id="P41148"/>
<dbReference type="ChEMBL" id="CHEMBL4748"/>
<dbReference type="DrugCentral" id="P41148"/>
<dbReference type="GlyCosmos" id="P41148">
    <property type="glycosylation" value="6 sites, No reported glycans"/>
</dbReference>
<dbReference type="PaxDb" id="9612-ENSCAFP00000011044"/>
<dbReference type="Ensembl" id="ENSCAFT00030016065.1">
    <property type="protein sequence ID" value="ENSCAFP00030014018.1"/>
    <property type="gene ID" value="ENSCAFG00030008539.1"/>
</dbReference>
<dbReference type="Ensembl" id="ENSCAFT00040040938.1">
    <property type="protein sequence ID" value="ENSCAFP00040035695.1"/>
    <property type="gene ID" value="ENSCAFG00040021951.1"/>
</dbReference>
<dbReference type="Ensembl" id="ENSCAFT00845018625.1">
    <property type="protein sequence ID" value="ENSCAFP00845014533.1"/>
    <property type="gene ID" value="ENSCAFG00845010421.1"/>
</dbReference>
<dbReference type="GeneID" id="404019"/>
<dbReference type="KEGG" id="cfa:404019"/>
<dbReference type="CTD" id="7184"/>
<dbReference type="VEuPathDB" id="HostDB:ENSCAFG00845010421"/>
<dbReference type="eggNOG" id="KOG0020">
    <property type="taxonomic scope" value="Eukaryota"/>
</dbReference>
<dbReference type="GeneTree" id="ENSGT01020000230401"/>
<dbReference type="InParanoid" id="P41148"/>
<dbReference type="OrthoDB" id="5426351at2759"/>
<dbReference type="Reactome" id="R-CFA-1679131">
    <property type="pathway name" value="Trafficking and processing of endosomal TLR"/>
</dbReference>
<dbReference type="Reactome" id="R-CFA-3000480">
    <property type="pathway name" value="Scavenging by Class A Receptors"/>
</dbReference>
<dbReference type="Reactome" id="R-CFA-381426">
    <property type="pathway name" value="Regulation of Insulin-like Growth Factor (IGF) transport and uptake by Insulin-like Growth Factor Binding Proteins (IGFBPs)"/>
</dbReference>
<dbReference type="Reactome" id="R-CFA-6785807">
    <property type="pathway name" value="Interleukin-4 and Interleukin-13 signaling"/>
</dbReference>
<dbReference type="Reactome" id="R-CFA-8957275">
    <property type="pathway name" value="Post-translational protein phosphorylation"/>
</dbReference>
<dbReference type="SABIO-RK" id="P41148"/>
<dbReference type="EvolutionaryTrace" id="P41148"/>
<dbReference type="PRO" id="PR:P41148"/>
<dbReference type="Proteomes" id="UP000002254">
    <property type="component" value="Unplaced"/>
</dbReference>
<dbReference type="Proteomes" id="UP000694429">
    <property type="component" value="Chromosome 15"/>
</dbReference>
<dbReference type="Proteomes" id="UP000694542">
    <property type="component" value="Chromosome 15"/>
</dbReference>
<dbReference type="Proteomes" id="UP000805418">
    <property type="component" value="Chromosome 15"/>
</dbReference>
<dbReference type="GO" id="GO:0005783">
    <property type="term" value="C:endoplasmic reticulum"/>
    <property type="evidence" value="ECO:0000318"/>
    <property type="project" value="GO_Central"/>
</dbReference>
<dbReference type="GO" id="GO:0042470">
    <property type="term" value="C:melanosome"/>
    <property type="evidence" value="ECO:0007669"/>
    <property type="project" value="UniProtKB-SubCell"/>
</dbReference>
<dbReference type="GO" id="GO:0048471">
    <property type="term" value="C:perinuclear region of cytoplasm"/>
    <property type="evidence" value="ECO:0000318"/>
    <property type="project" value="GO_Central"/>
</dbReference>
<dbReference type="GO" id="GO:0033018">
    <property type="term" value="C:sarcoplasmic reticulum lumen"/>
    <property type="evidence" value="ECO:0007669"/>
    <property type="project" value="UniProtKB-SubCell"/>
</dbReference>
<dbReference type="GO" id="GO:0005524">
    <property type="term" value="F:ATP binding"/>
    <property type="evidence" value="ECO:0000318"/>
    <property type="project" value="GO_Central"/>
</dbReference>
<dbReference type="GO" id="GO:0016887">
    <property type="term" value="F:ATP hydrolysis activity"/>
    <property type="evidence" value="ECO:0000318"/>
    <property type="project" value="GO_Central"/>
</dbReference>
<dbReference type="GO" id="GO:0140662">
    <property type="term" value="F:ATP-dependent protein folding chaperone"/>
    <property type="evidence" value="ECO:0000314"/>
    <property type="project" value="UniProtKB"/>
</dbReference>
<dbReference type="GO" id="GO:0051082">
    <property type="term" value="F:unfolded protein binding"/>
    <property type="evidence" value="ECO:0000318"/>
    <property type="project" value="GO_Central"/>
</dbReference>
<dbReference type="GO" id="GO:0036503">
    <property type="term" value="P:ERAD pathway"/>
    <property type="evidence" value="ECO:0000250"/>
    <property type="project" value="UniProtKB"/>
</dbReference>
<dbReference type="GO" id="GO:0006457">
    <property type="term" value="P:protein folding"/>
    <property type="evidence" value="ECO:0000318"/>
    <property type="project" value="GO_Central"/>
</dbReference>
<dbReference type="CDD" id="cd16927">
    <property type="entry name" value="HATPase_Hsp90-like"/>
    <property type="match status" value="1"/>
</dbReference>
<dbReference type="FunFam" id="3.30.230.80:FF:000003">
    <property type="entry name" value="endoplasmin isoform X1"/>
    <property type="match status" value="1"/>
</dbReference>
<dbReference type="FunFam" id="1.20.120.790:FF:000003">
    <property type="entry name" value="Heat shock protein 90"/>
    <property type="match status" value="1"/>
</dbReference>
<dbReference type="FunFam" id="3.30.565.10:FF:000005">
    <property type="entry name" value="Heat shock protein 90"/>
    <property type="match status" value="1"/>
</dbReference>
<dbReference type="FunFam" id="3.40.50.11260:FF:000003">
    <property type="entry name" value="Heat shock protein 90"/>
    <property type="match status" value="1"/>
</dbReference>
<dbReference type="Gene3D" id="3.30.230.80">
    <property type="match status" value="1"/>
</dbReference>
<dbReference type="Gene3D" id="3.40.50.11260">
    <property type="match status" value="1"/>
</dbReference>
<dbReference type="Gene3D" id="1.20.120.790">
    <property type="entry name" value="Heat shock protein 90, C-terminal domain"/>
    <property type="match status" value="1"/>
</dbReference>
<dbReference type="Gene3D" id="3.30.565.10">
    <property type="entry name" value="Histidine kinase-like ATPase, C-terminal domain"/>
    <property type="match status" value="1"/>
</dbReference>
<dbReference type="HAMAP" id="MF_00505">
    <property type="entry name" value="HSP90"/>
    <property type="match status" value="1"/>
</dbReference>
<dbReference type="InterPro" id="IPR036890">
    <property type="entry name" value="HATPase_C_sf"/>
</dbReference>
<dbReference type="InterPro" id="IPR019805">
    <property type="entry name" value="Heat_shock_protein_90_CS"/>
</dbReference>
<dbReference type="InterPro" id="IPR037196">
    <property type="entry name" value="HSP90_C"/>
</dbReference>
<dbReference type="InterPro" id="IPR001404">
    <property type="entry name" value="Hsp90_fam"/>
</dbReference>
<dbReference type="InterPro" id="IPR020575">
    <property type="entry name" value="Hsp90_N"/>
</dbReference>
<dbReference type="InterPro" id="IPR020568">
    <property type="entry name" value="Ribosomal_Su5_D2-typ_SF"/>
</dbReference>
<dbReference type="NCBIfam" id="NF003555">
    <property type="entry name" value="PRK05218.1"/>
    <property type="match status" value="1"/>
</dbReference>
<dbReference type="PANTHER" id="PTHR11528">
    <property type="entry name" value="HEAT SHOCK PROTEIN 90 FAMILY MEMBER"/>
    <property type="match status" value="1"/>
</dbReference>
<dbReference type="Pfam" id="PF13589">
    <property type="entry name" value="HATPase_c_3"/>
    <property type="match status" value="1"/>
</dbReference>
<dbReference type="Pfam" id="PF00183">
    <property type="entry name" value="HSP90"/>
    <property type="match status" value="1"/>
</dbReference>
<dbReference type="PIRSF" id="PIRSF002583">
    <property type="entry name" value="Hsp90"/>
    <property type="match status" value="1"/>
</dbReference>
<dbReference type="PRINTS" id="PR00775">
    <property type="entry name" value="HEATSHOCK90"/>
</dbReference>
<dbReference type="SMART" id="SM00387">
    <property type="entry name" value="HATPase_c"/>
    <property type="match status" value="1"/>
</dbReference>
<dbReference type="SUPFAM" id="SSF55874">
    <property type="entry name" value="ATPase domain of HSP90 chaperone/DNA topoisomerase II/histidine kinase"/>
    <property type="match status" value="1"/>
</dbReference>
<dbReference type="SUPFAM" id="SSF110942">
    <property type="entry name" value="HSP90 C-terminal domain"/>
    <property type="match status" value="1"/>
</dbReference>
<dbReference type="SUPFAM" id="SSF54211">
    <property type="entry name" value="Ribosomal protein S5 domain 2-like"/>
    <property type="match status" value="1"/>
</dbReference>
<dbReference type="PROSITE" id="PS00014">
    <property type="entry name" value="ER_TARGET"/>
    <property type="match status" value="1"/>
</dbReference>
<dbReference type="PROSITE" id="PS00298">
    <property type="entry name" value="HSP90"/>
    <property type="match status" value="1"/>
</dbReference>
<protein>
    <recommendedName>
        <fullName>Endoplasmin</fullName>
        <ecNumber evidence="8">3.6.4.-</ecNumber>
    </recommendedName>
    <alternativeName>
        <fullName>94 kDa glucose-regulated protein</fullName>
        <shortName>GRP-94</shortName>
    </alternativeName>
    <alternativeName>
        <fullName>Heat shock protein 90 kDa beta member 1</fullName>
    </alternativeName>
</protein>
<reference key="1">
    <citation type="journal article" date="1994" name="J. Biol. Chem.">
        <title>GRP94 resides within cardiac sarcoplasmic reticulum vesicles and is phosphorylated by casein kinase II.</title>
        <authorList>
            <person name="Cala S.E."/>
            <person name="Jones L.R."/>
        </authorList>
    </citation>
    <scope>NUCLEOTIDE SEQUENCE [MRNA]</scope>
    <scope>PARTIAL PROTEIN SEQUENCE</scope>
    <scope>SUBCELLULAR LOCATION</scope>
    <scope>PHOSPHORYLATION</scope>
    <source>
        <tissue>Heart</tissue>
    </source>
</reference>
<reference evidence="12 13 17 26" key="2">
    <citation type="journal article" date="2003" name="J. Biol. Chem.">
        <title>Structure of the N-terminal domain of GRP94. Basis for ligand specificity and regulation.</title>
        <authorList>
            <person name="Soldano K.L."/>
            <person name="Jivan A."/>
            <person name="Nicchitta C.V."/>
            <person name="Gewirth D.T."/>
        </authorList>
    </citation>
    <scope>X-RAY CRYSTALLOGRAPHY (1.75 ANGSTROMS) OF 69-337 IN COMPLEX WITH ADENOSINE ANALOG</scope>
</reference>
<reference evidence="14 15 16" key="3">
    <citation type="journal article" date="2004" name="J. Biol. Chem.">
        <title>Ligand-induced conformational shift in the N-terminal domain of GRP94, an Hsp90 chaperone.</title>
        <authorList>
            <person name="Immormino R.M."/>
            <person name="Dollins D.E."/>
            <person name="Shaffer P.L."/>
            <person name="Soldano K.L."/>
            <person name="Walker M.A."/>
            <person name="Gewirth D.T."/>
        </authorList>
    </citation>
    <scope>X-RAY CRYSTALLOGRAPHY (1.87 ANGSTROMS) OF 69-337 IN COMPLEXES WITH ATP; ADP AND AMP</scope>
    <scope>SUBUNIT</scope>
</reference>
<reference evidence="18 19 20 21" key="4">
    <citation type="journal article" date="2005" name="J. Biol. Chem.">
        <title>Structure of unliganded GRP94, the endoplasmic reticulum Hsp90. Basis for nucleotide-induced conformational change.</title>
        <authorList>
            <person name="Dollins D.E."/>
            <person name="Immormino R.M."/>
            <person name="Gewirth D.T."/>
        </authorList>
    </citation>
    <scope>X-RAY CRYSTALLOGRAPHY (2.2 ANGSTROMS) OF 69-337 OF APOPROTEIN AND IN COMPLEXES WITH ADP AND NECA</scope>
</reference>
<reference evidence="22 23 24 25" key="5">
    <citation type="journal article" date="2007" name="Mol. Cell">
        <title>Structures of GRP94-nucleotide complexes reveal mechanistic differences between the hsp90 chaperones.</title>
        <authorList>
            <person name="Dollins D.E."/>
            <person name="Warren J.J."/>
            <person name="Immormino R.M."/>
            <person name="Gewirth D.T."/>
        </authorList>
    </citation>
    <scope>X-RAY CRYSTALLOGRAPHY (2.4 ANGSTROMS) OF 73-754 IN COMPLEXES WITH AMPPNP AND ADP</scope>
    <scope>FUNCTION</scope>
    <scope>SUBUNIT</scope>
    <scope>BIOPHYSICOCHEMICAL PROPERTIES</scope>
    <scope>MUTAGENESIS OF GLU-103 AND ARG-448</scope>
    <scope>CATALYTIC ACTIVITY</scope>
</reference>
<evidence type="ECO:0000250" key="1">
    <source>
        <dbReference type="UniProtKB" id="P08113"/>
    </source>
</evidence>
<evidence type="ECO:0000250" key="2">
    <source>
        <dbReference type="UniProtKB" id="P14625"/>
    </source>
</evidence>
<evidence type="ECO:0000250" key="3">
    <source>
        <dbReference type="UniProtKB" id="Q66HD0"/>
    </source>
</evidence>
<evidence type="ECO:0000255" key="4"/>
<evidence type="ECO:0000256" key="5">
    <source>
        <dbReference type="SAM" id="MobiDB-lite"/>
    </source>
</evidence>
<evidence type="ECO:0000269" key="6">
    <source>
    </source>
</evidence>
<evidence type="ECO:0000269" key="7">
    <source>
    </source>
</evidence>
<evidence type="ECO:0000269" key="8">
    <source>
    </source>
</evidence>
<evidence type="ECO:0000269" key="9">
    <source>
    </source>
</evidence>
<evidence type="ECO:0000303" key="10">
    <source>
    </source>
</evidence>
<evidence type="ECO:0000305" key="11"/>
<evidence type="ECO:0007744" key="12">
    <source>
        <dbReference type="PDB" id="1QY8"/>
    </source>
</evidence>
<evidence type="ECO:0007744" key="13">
    <source>
        <dbReference type="PDB" id="1QYE"/>
    </source>
</evidence>
<evidence type="ECO:0007744" key="14">
    <source>
        <dbReference type="PDB" id="1TBW"/>
    </source>
</evidence>
<evidence type="ECO:0007744" key="15">
    <source>
        <dbReference type="PDB" id="1TC0"/>
    </source>
</evidence>
<evidence type="ECO:0007744" key="16">
    <source>
        <dbReference type="PDB" id="1TC6"/>
    </source>
</evidence>
<evidence type="ECO:0007744" key="17">
    <source>
        <dbReference type="PDB" id="1U2O"/>
    </source>
</evidence>
<evidence type="ECO:0007744" key="18">
    <source>
        <dbReference type="PDB" id="1YSZ"/>
    </source>
</evidence>
<evidence type="ECO:0007744" key="19">
    <source>
        <dbReference type="PDB" id="1YT0"/>
    </source>
</evidence>
<evidence type="ECO:0007744" key="20">
    <source>
        <dbReference type="PDB" id="1YT1"/>
    </source>
</evidence>
<evidence type="ECO:0007744" key="21">
    <source>
        <dbReference type="PDB" id="1YT2"/>
    </source>
</evidence>
<evidence type="ECO:0007744" key="22">
    <source>
        <dbReference type="PDB" id="2O1T"/>
    </source>
</evidence>
<evidence type="ECO:0007744" key="23">
    <source>
        <dbReference type="PDB" id="2O1U"/>
    </source>
</evidence>
<evidence type="ECO:0007744" key="24">
    <source>
        <dbReference type="PDB" id="2O1V"/>
    </source>
</evidence>
<evidence type="ECO:0007744" key="25">
    <source>
        <dbReference type="PDB" id="2O1W"/>
    </source>
</evidence>
<evidence type="ECO:0007744" key="26">
    <source>
        <dbReference type="PDB" id="6D28"/>
    </source>
</evidence>
<evidence type="ECO:0007829" key="27">
    <source>
        <dbReference type="PDB" id="2GQP"/>
    </source>
</evidence>
<evidence type="ECO:0007829" key="28">
    <source>
        <dbReference type="PDB" id="2O1T"/>
    </source>
</evidence>
<evidence type="ECO:0007829" key="29">
    <source>
        <dbReference type="PDB" id="2O1U"/>
    </source>
</evidence>
<evidence type="ECO:0007829" key="30">
    <source>
        <dbReference type="PDB" id="2O1V"/>
    </source>
</evidence>
<evidence type="ECO:0007829" key="31">
    <source>
        <dbReference type="PDB" id="5ULS"/>
    </source>
</evidence>
<evidence type="ECO:0007829" key="32">
    <source>
        <dbReference type="PDB" id="6D28"/>
    </source>
</evidence>
<evidence type="ECO:0007829" key="33">
    <source>
        <dbReference type="PDB" id="8SSV"/>
    </source>
</evidence>
<evidence type="ECO:0007829" key="34">
    <source>
        <dbReference type="PDB" id="8TF0"/>
    </source>
</evidence>
<organism>
    <name type="scientific">Canis lupus familiaris</name>
    <name type="common">Dog</name>
    <name type="synonym">Canis familiaris</name>
    <dbReference type="NCBI Taxonomy" id="9615"/>
    <lineage>
        <taxon>Eukaryota</taxon>
        <taxon>Metazoa</taxon>
        <taxon>Chordata</taxon>
        <taxon>Craniata</taxon>
        <taxon>Vertebrata</taxon>
        <taxon>Euteleostomi</taxon>
        <taxon>Mammalia</taxon>
        <taxon>Eutheria</taxon>
        <taxon>Laurasiatheria</taxon>
        <taxon>Carnivora</taxon>
        <taxon>Caniformia</taxon>
        <taxon>Canidae</taxon>
        <taxon>Canis</taxon>
    </lineage>
</organism>
<keyword id="KW-0002">3D-structure</keyword>
<keyword id="KW-0007">Acetylation</keyword>
<keyword id="KW-0067">ATP-binding</keyword>
<keyword id="KW-0106">Calcium</keyword>
<keyword id="KW-0143">Chaperone</keyword>
<keyword id="KW-0903">Direct protein sequencing</keyword>
<keyword id="KW-1015">Disulfide bond</keyword>
<keyword id="KW-0256">Endoplasmic reticulum</keyword>
<keyword id="KW-0325">Glycoprotein</keyword>
<keyword id="KW-0378">Hydrolase</keyword>
<keyword id="KW-0379">Hydroxylation</keyword>
<keyword id="KW-0547">Nucleotide-binding</keyword>
<keyword id="KW-0597">Phosphoprotein</keyword>
<keyword id="KW-1185">Reference proteome</keyword>
<keyword id="KW-0703">Sarcoplasmic reticulum</keyword>
<keyword id="KW-0732">Signal</keyword>
<name>ENPL_CANLF</name>
<sequence length="804" mass="92514">MRALWVLGLCCVLLTFGSVRADDEVDVDGTVEEDLGKSREGSRTDDEVVQREEEAIQLDGLNASQIRELREKSEKFAFQAEVNRMMKLIINSLYKNKEIFLRELISNASDALDKIRLISLTDENALAGNEELTVKIKCDKEKNLLHVTDTGVGMTREELVKNLGTIAKSGTSEFLNKMTEAQEDGQSTSELIGQFGVGFYSAFLVADKVIVTSKHNNDTQHIWESDSNEFSVIADPRGNTLGRGTTITLVLKEEASDYLELDTIKNLVKKYSQFINFPIYVWSSKTETVEEPMEEEEAAKEEKEDSDDEAAVEEEEEEKKPKTKKVEKTVWDWELMNDIKPIWQRPSKEVEDDEYKAFYKSFSKESDDPMAYIHFTAEGEVTFKSILFVPTSAPRGLFDEYGSKKSDYIKLYVRRVFITDDFHDMMPKYLNFVKGVVDSDDLPLNVSRETLQQHKLLKVIRKKLVRKTLDMIKKIADEKYNDTFWKEFGTNIKLGVIEDHSNRTRLAKLLRFQSSHHPSDITSLDQYVERMKEKQDKIYFMAGSSRKEAESSPFVERLLKKGYEVIYLTEPVDEYCIQALPEFDGKRFQNVAKEGVKFDESEKTKESREAIEKEFEPLLNWMKDKALKDKIEKAVVSQRLTESPCALVASQYGWSGNMERIMKAQAYQTGKDISTNYYASQKKTFEINPRHPLIKDMLRRVKEDEDDKTVSDLAVVLFETATLRSGYLLPDTKAYGDRIERMLRLSLNIDPDAKVEEEPEEEPEETTEDTTEDTEQDDEEEMDAGTDDEEQETVKKSTAEKDEL</sequence>
<gene>
    <name type="primary">HSP90B1</name>
    <name evidence="10" type="synonym">GRP94</name>
    <name evidence="2" type="synonym">HSPC4</name>
    <name type="synonym">TRA1</name>
</gene>
<proteinExistence type="evidence at protein level"/>